<sequence length="513" mass="55793">MMHTFLRRLCVVALCLGYIKASADFDCRRTSQSCVTGTCNDVNGDCDCPTDANGVATHRNADCGLEIAKVVPTALCGPPCLNGGECYEPTVGTYMCMCPEAFYGNKCENPRKKVECSGTEITINYMPIPTFSGDIFILDNRNTPECAFTEANGMYTATFTYQQCGVTTTNDQPNAGDTSYEISAAVRFNANIERATDMKLTAKCVIDGTGQSNLNDNIGTVSVDQRTDLTEETALTEYQPVSFQLQGKNGNPMPVPVNLGDELRIYIPLADTGRYTKLKITELQTNNGMVEQDLVMETLIFNGCLTDIGEALVTGDISSDPAIPAIIINFMAFRLRGSPQVKFDARVQVCEGTDTSCDSVVCPSPPQSVPSNPQNIPPANPQNIPPANPQNIPPANPQISPSSSQRKRRAAPDNEVILHETLTVLDPRSNEKLRLPHNKSDIKSQQNADPQQCLQSTEIMVMVIVLIVAVVLLLVITTCLAVKFMKQRAAQVKIYNPDMPTGNNTVRIPRAAC</sequence>
<keyword id="KW-0903">Direct protein sequencing</keyword>
<keyword id="KW-1015">Disulfide bond</keyword>
<keyword id="KW-0245">EGF-like domain</keyword>
<keyword id="KW-0325">Glycoprotein</keyword>
<keyword id="KW-0964">Secreted</keyword>
<keyword id="KW-0732">Signal</keyword>
<reference evidence="7" key="1">
    <citation type="submission" date="2007-12" db="EMBL/GenBank/DDBJ databases">
        <title>DOE Joint Genome Institute Lottia gigantea EST project.</title>
        <authorList>
            <person name="Richardson P."/>
            <person name="Lucas S."/>
            <person name="Rokhsar D."/>
            <person name="Wang M."/>
            <person name="Lindquist E.A."/>
        </authorList>
    </citation>
    <scope>NUCLEOTIDE SEQUENCE [LARGE SCALE MRNA]</scope>
    <scope>IDENTIFICATION</scope>
    <source>
        <tissue evidence="6">Mantle</tissue>
    </source>
</reference>
<reference key="2">
    <citation type="journal article" date="2013" name="FEBS J.">
        <title>The shell-forming proteome of Lottia gigantea reveals both deep conservations and lineage-specific novelties.</title>
        <authorList>
            <person name="Marie B."/>
            <person name="Jackson D.J."/>
            <person name="Ramos-Silva P."/>
            <person name="Zanella-Cleon I."/>
            <person name="Guichard N."/>
            <person name="Marin F."/>
        </authorList>
    </citation>
    <scope>PROTEIN SEQUENCE OF 204-226 AND 265-274</scope>
    <scope>SUBCELLULAR LOCATION</scope>
    <scope>TISSUE SPECIFICITY</scope>
    <source>
        <tissue>Shell</tissue>
    </source>
</reference>
<feature type="signal peptide" evidence="1">
    <location>
        <begin position="1"/>
        <end position="21"/>
    </location>
</feature>
<feature type="chain" id="PRO_0000415253" description="EGF-like domain-containing protein 1" evidence="1">
    <location>
        <begin position="22"/>
        <end position="513"/>
    </location>
</feature>
<feature type="domain" description="EGF-like" evidence="2">
    <location>
        <begin position="72"/>
        <end position="108"/>
    </location>
</feature>
<feature type="domain" description="ZP" evidence="3">
    <location>
        <begin position="115"/>
        <end position="364"/>
    </location>
</feature>
<feature type="region of interest" description="Disordered" evidence="4">
    <location>
        <begin position="356"/>
        <end position="411"/>
    </location>
</feature>
<feature type="compositionally biased region" description="Pro residues" evidence="4">
    <location>
        <begin position="375"/>
        <end position="396"/>
    </location>
</feature>
<feature type="glycosylation site" description="N-linked (GlcNAc...) asparagine" evidence="1">
    <location>
        <position position="438"/>
    </location>
</feature>
<feature type="glycosylation site" description="N-linked (GlcNAc...) asparagine" evidence="1">
    <location>
        <position position="503"/>
    </location>
</feature>
<feature type="disulfide bond" evidence="2">
    <location>
        <begin position="76"/>
        <end position="86"/>
    </location>
</feature>
<feature type="disulfide bond" evidence="2">
    <location>
        <begin position="80"/>
        <end position="96"/>
    </location>
</feature>
<feature type="disulfide bond" evidence="2">
    <location>
        <begin position="98"/>
        <end position="107"/>
    </location>
</feature>
<proteinExistence type="evidence at protein level"/>
<name>ELDP1_LOTGI</name>
<protein>
    <recommendedName>
        <fullName>EGF-like domain-containing protein 1</fullName>
    </recommendedName>
    <alternativeName>
        <fullName>Uncharacterized shell protein 17</fullName>
        <shortName>LUSP-17</shortName>
    </alternativeName>
</protein>
<dbReference type="EMBL" id="FC621435">
    <property type="status" value="NOT_ANNOTATED_CDS"/>
    <property type="molecule type" value="mRNA"/>
</dbReference>
<dbReference type="EMBL" id="FC628777">
    <property type="status" value="NOT_ANNOTATED_CDS"/>
    <property type="molecule type" value="mRNA"/>
</dbReference>
<dbReference type="GO" id="GO:0005576">
    <property type="term" value="C:extracellular region"/>
    <property type="evidence" value="ECO:0007669"/>
    <property type="project" value="UniProtKB-SubCell"/>
</dbReference>
<dbReference type="CDD" id="cd00054">
    <property type="entry name" value="EGF_CA"/>
    <property type="match status" value="1"/>
</dbReference>
<dbReference type="Gene3D" id="2.10.25.10">
    <property type="entry name" value="Laminin"/>
    <property type="match status" value="1"/>
</dbReference>
<dbReference type="InterPro" id="IPR051962">
    <property type="entry name" value="Cuticlin"/>
</dbReference>
<dbReference type="InterPro" id="IPR000742">
    <property type="entry name" value="EGF-like_dom"/>
</dbReference>
<dbReference type="InterPro" id="IPR001507">
    <property type="entry name" value="ZP_dom"/>
</dbReference>
<dbReference type="PANTHER" id="PTHR22907">
    <property type="entry name" value="GH04558P"/>
    <property type="match status" value="1"/>
</dbReference>
<dbReference type="PANTHER" id="PTHR22907:SF54">
    <property type="entry name" value="GH04558P"/>
    <property type="match status" value="1"/>
</dbReference>
<dbReference type="SUPFAM" id="SSF57196">
    <property type="entry name" value="EGF/Laminin"/>
    <property type="match status" value="1"/>
</dbReference>
<dbReference type="PROSITE" id="PS00022">
    <property type="entry name" value="EGF_1"/>
    <property type="match status" value="1"/>
</dbReference>
<dbReference type="PROSITE" id="PS50026">
    <property type="entry name" value="EGF_3"/>
    <property type="match status" value="1"/>
</dbReference>
<dbReference type="PROSITE" id="PS51034">
    <property type="entry name" value="ZP_2"/>
    <property type="match status" value="1"/>
</dbReference>
<evidence type="ECO:0000255" key="1"/>
<evidence type="ECO:0000255" key="2">
    <source>
        <dbReference type="PROSITE-ProRule" id="PRU00076"/>
    </source>
</evidence>
<evidence type="ECO:0000255" key="3">
    <source>
        <dbReference type="PROSITE-ProRule" id="PRU00375"/>
    </source>
</evidence>
<evidence type="ECO:0000256" key="4">
    <source>
        <dbReference type="SAM" id="MobiDB-lite"/>
    </source>
</evidence>
<evidence type="ECO:0000269" key="5">
    <source>
    </source>
</evidence>
<evidence type="ECO:0000269" key="6">
    <source ref="1"/>
</evidence>
<evidence type="ECO:0000305" key="7"/>
<organism>
    <name type="scientific">Lottia gigantea</name>
    <name type="common">Giant owl limpet</name>
    <dbReference type="NCBI Taxonomy" id="225164"/>
    <lineage>
        <taxon>Eukaryota</taxon>
        <taxon>Metazoa</taxon>
        <taxon>Spiralia</taxon>
        <taxon>Lophotrochozoa</taxon>
        <taxon>Mollusca</taxon>
        <taxon>Gastropoda</taxon>
        <taxon>Patellogastropoda</taxon>
        <taxon>Lottioidea</taxon>
        <taxon>Lottiidae</taxon>
        <taxon>Lottia</taxon>
    </lineage>
</organism>
<accession>B3A0R6</accession>
<comment type="subcellular location">
    <subcellularLocation>
        <location evidence="5">Secreted</location>
    </subcellularLocation>
</comment>
<comment type="tissue specificity">
    <text evidence="5">Component of the acid-insoluble organic matrix of calcified layers of the shell (at protein level).</text>
</comment>